<reference key="1">
    <citation type="journal article" date="2015" name="Angew. Chem. Int. Ed.">
        <title>Reconstitution of biosynthetic machinery for the synthesis of the highly elaborated indole diterpene penitrem.</title>
        <authorList>
            <person name="Liu C."/>
            <person name="Tagami K."/>
            <person name="Minami A."/>
            <person name="Matsumoto T."/>
            <person name="Frisvad J.C."/>
            <person name="Suzuki H."/>
            <person name="Ishikawa J."/>
            <person name="Gomi K."/>
            <person name="Oikawa H."/>
        </authorList>
    </citation>
    <scope>NUCLEOTIDE SEQUENCE [GENOMIC DNA]</scope>
    <scope>IDENTIFICATION</scope>
    <scope>FUNCTION</scope>
    <scope>PATHWAY</scope>
    <source>
        <strain>ATCC 90288 / AK-40</strain>
    </source>
</reference>
<protein>
    <recommendedName>
        <fullName evidence="5">Cytochrome P450 monooxygenase ptmK</fullName>
        <ecNumber evidence="4">1.-.-.-</ecNumber>
    </recommendedName>
    <alternativeName>
        <fullName evidence="5">Penitrem biosynthesis cluster 2 protein K</fullName>
    </alternativeName>
</protein>
<feature type="chain" id="PRO_0000446579" description="Cytochrome P450 monooxygenase ptmK">
    <location>
        <begin position="1"/>
        <end position="510"/>
    </location>
</feature>
<feature type="transmembrane region" description="Helical" evidence="2">
    <location>
        <begin position="2"/>
        <end position="22"/>
    </location>
</feature>
<feature type="binding site" description="axial binding residue" evidence="1">
    <location>
        <position position="456"/>
    </location>
    <ligand>
        <name>heme</name>
        <dbReference type="ChEBI" id="CHEBI:30413"/>
    </ligand>
    <ligandPart>
        <name>Fe</name>
        <dbReference type="ChEBI" id="CHEBI:18248"/>
    </ligandPart>
</feature>
<feature type="glycosylation site" description="N-linked (GlcNAc...) asparagine" evidence="3">
    <location>
        <position position="313"/>
    </location>
</feature>
<feature type="glycosylation site" description="N-linked (GlcNAc...) asparagine" evidence="3">
    <location>
        <position position="408"/>
    </location>
</feature>
<feature type="glycosylation site" description="N-linked (GlcNAc...) asparagine" evidence="3">
    <location>
        <position position="443"/>
    </location>
</feature>
<keyword id="KW-0325">Glycoprotein</keyword>
<keyword id="KW-0349">Heme</keyword>
<keyword id="KW-0408">Iron</keyword>
<keyword id="KW-0472">Membrane</keyword>
<keyword id="KW-0479">Metal-binding</keyword>
<keyword id="KW-0503">Monooxygenase</keyword>
<keyword id="KW-0560">Oxidoreductase</keyword>
<keyword id="KW-0812">Transmembrane</keyword>
<keyword id="KW-1133">Transmembrane helix</keyword>
<sequence length="510" mass="57362">MIIVTFFWVGIVLSAIWTFYKVVLYPYRVSPLRTLPQSQRGHWLWNHAFSEFLQPIGQLHAELLLQIPNDGMICLRGLFGAPKIFLTSPKSLADVLVHRADDFEKLPGERKILRAVVGDGLVTAEGDVHYQQKRKLLAGFTPPKIRALYPVFWKEATALTQQIRRTLTHDGSGIYTGTTDMVYWAPRVSMDMIGAAGFGQSFHSLRDADSEIIHCYEKAFAIGAGHLLCVFADTLLPRIILQWLPWPRWRQFRQNIDSIRDFCHQWVTDAKATTALGDGIPNNLLANMIHTGEYTFQELIEQVRTFLAAGHENTSSVVMWVMLALASDSQLQSRLRQELQANLPEVELDEVDLAILEQLPLLNAVVSEAIRLFPPLPIGNRIAIRDTTVMNHPIPKGTPFLIVPRAINRSSELWGPDADRFNADRWINPDTGRFNNHGGASSNYSFLSFFHGPHNCIGQNFARAELRTVVAAVIRSFDMVLDNPAADVSPVGWFTPRPADGVKVKLRSLV</sequence>
<dbReference type="EC" id="1.-.-.-" evidence="4"/>
<dbReference type="EMBL" id="LC027937">
    <property type="protein sequence ID" value="BAU61566.1"/>
    <property type="molecule type" value="Genomic_DNA"/>
</dbReference>
<dbReference type="SMR" id="A0A140JWT9"/>
<dbReference type="GlyCosmos" id="A0A140JWT9">
    <property type="glycosylation" value="3 sites, No reported glycans"/>
</dbReference>
<dbReference type="GO" id="GO:0016020">
    <property type="term" value="C:membrane"/>
    <property type="evidence" value="ECO:0007669"/>
    <property type="project" value="UniProtKB-SubCell"/>
</dbReference>
<dbReference type="GO" id="GO:0020037">
    <property type="term" value="F:heme binding"/>
    <property type="evidence" value="ECO:0007669"/>
    <property type="project" value="InterPro"/>
</dbReference>
<dbReference type="GO" id="GO:0005506">
    <property type="term" value="F:iron ion binding"/>
    <property type="evidence" value="ECO:0007669"/>
    <property type="project" value="InterPro"/>
</dbReference>
<dbReference type="GO" id="GO:0004497">
    <property type="term" value="F:monooxygenase activity"/>
    <property type="evidence" value="ECO:0007669"/>
    <property type="project" value="UniProtKB-KW"/>
</dbReference>
<dbReference type="GO" id="GO:0016705">
    <property type="term" value="F:oxidoreductase activity, acting on paired donors, with incorporation or reduction of molecular oxygen"/>
    <property type="evidence" value="ECO:0007669"/>
    <property type="project" value="InterPro"/>
</dbReference>
<dbReference type="GO" id="GO:0043386">
    <property type="term" value="P:mycotoxin biosynthetic process"/>
    <property type="evidence" value="ECO:0007669"/>
    <property type="project" value="UniProtKB-ARBA"/>
</dbReference>
<dbReference type="CDD" id="cd11069">
    <property type="entry name" value="CYP_FUM15-like"/>
    <property type="match status" value="1"/>
</dbReference>
<dbReference type="Gene3D" id="1.10.630.10">
    <property type="entry name" value="Cytochrome P450"/>
    <property type="match status" value="1"/>
</dbReference>
<dbReference type="InterPro" id="IPR001128">
    <property type="entry name" value="Cyt_P450"/>
</dbReference>
<dbReference type="InterPro" id="IPR002403">
    <property type="entry name" value="Cyt_P450_E_grp-IV"/>
</dbReference>
<dbReference type="InterPro" id="IPR036396">
    <property type="entry name" value="Cyt_P450_sf"/>
</dbReference>
<dbReference type="InterPro" id="IPR050121">
    <property type="entry name" value="Cytochrome_P450_monoxygenase"/>
</dbReference>
<dbReference type="PANTHER" id="PTHR24305">
    <property type="entry name" value="CYTOCHROME P450"/>
    <property type="match status" value="1"/>
</dbReference>
<dbReference type="PANTHER" id="PTHR24305:SF166">
    <property type="entry name" value="CYTOCHROME P450 12A4, MITOCHONDRIAL-RELATED"/>
    <property type="match status" value="1"/>
</dbReference>
<dbReference type="Pfam" id="PF00067">
    <property type="entry name" value="p450"/>
    <property type="match status" value="1"/>
</dbReference>
<dbReference type="PRINTS" id="PR00465">
    <property type="entry name" value="EP450IV"/>
</dbReference>
<dbReference type="PRINTS" id="PR00385">
    <property type="entry name" value="P450"/>
</dbReference>
<dbReference type="SUPFAM" id="SSF48264">
    <property type="entry name" value="Cytochrome P450"/>
    <property type="match status" value="1"/>
</dbReference>
<name>PTMK_PENOH</name>
<gene>
    <name evidence="5" type="primary">ptmK</name>
</gene>
<proteinExistence type="inferred from homology"/>
<comment type="function">
    <text evidence="4">Cytochrome P450 monooxygenase; part of the gene cluster that mediates the biosynthesis of the indole diterpenes penitrems (PubMed:25831977). The geranylgeranyl diphosphate (GGPP) synthase ptmG catalyzes the first step in penitrem biosynthesis via conversion of farnesyl pyrophosphate and isopentyl pyrophosphate into geranylgeranyl pyrophosphate (GGPP) (PubMed:25831977). Condensation of indole-3-glycerol phosphate with GGPP by the prenyl transferase ptmC then forms 3-geranylgeranylindole (3-GGI) (PubMed:25831977). Epoxidation by the FAD-dependent monooxygenase ptmM leads to a epoxidized-GGI that is substrate of the terpene cyclase ptmB for cyclization to yield paspaline (PubMed:25831977). Paspaline is subsequently converted to 13-desoxypaxilline by the cytochrome P450 monooxygenase ptmP, the latter being then converted to paxilline by the cytochrome P450 monooxygenase ptmQ (PubMed:25831977). Paxilline is converted to beta-paxitriol via C-10 ketoreduction by the short-chain dehydrogenase ptmH which can be monoprenylated at the C-20 by the indole diterpene prenyltransferase ptmD (PubMed:25831977). A two-step elimination (acetylation and elimination) process performed by the O-acetyltransferase ptmV and ptmI leads to the production of the prenylated form of penijanthine (PubMed:25831977). The FAD-linked oxidoreductase ptmO then converts the prenylated form of penijanthine into PC-M5 which is in turn transformed into PC-M4 by the aromatic dimethylallyltransferase ptmE (PubMed:25831977). Five sequential oxidative transformations performed by the cytochrome P450 monooxygenases ptmK, ptmU, ptmL, ptmN and ptmJ yield the various penitrem compounds. PtmK, ptmU and ptmM are involved in the formation of the key bicyclic ring of penitrem C via the formation of the intermediates secopenitrem D and penitrem D. PtmL catalyzes the epoxidation of penitrem D and C to yield penitrem B and F, respectively. PtmJ catalyzes the last benzylic hydroxylation to convert penitrem B to prenitrem E and penitrem F to penitrem A (PubMed:25831977).</text>
</comment>
<comment type="cofactor">
    <cofactor evidence="1">
        <name>heme</name>
        <dbReference type="ChEBI" id="CHEBI:30413"/>
    </cofactor>
</comment>
<comment type="pathway">
    <text evidence="4">Secondary metabolite biosynthesis.</text>
</comment>
<comment type="subcellular location">
    <subcellularLocation>
        <location evidence="2">Membrane</location>
        <topology evidence="2">Single-pass membrane protein</topology>
    </subcellularLocation>
</comment>
<comment type="similarity">
    <text evidence="6">Belongs to the cytochrome P450 family.</text>
</comment>
<evidence type="ECO:0000250" key="1">
    <source>
        <dbReference type="UniProtKB" id="P04798"/>
    </source>
</evidence>
<evidence type="ECO:0000255" key="2"/>
<evidence type="ECO:0000255" key="3">
    <source>
        <dbReference type="PROSITE-ProRule" id="PRU00498"/>
    </source>
</evidence>
<evidence type="ECO:0000269" key="4">
    <source>
    </source>
</evidence>
<evidence type="ECO:0000303" key="5">
    <source>
    </source>
</evidence>
<evidence type="ECO:0000305" key="6"/>
<organism>
    <name type="scientific">Penicillium ochrochloron</name>
    <dbReference type="NCBI Taxonomy" id="69780"/>
    <lineage>
        <taxon>Eukaryota</taxon>
        <taxon>Fungi</taxon>
        <taxon>Dikarya</taxon>
        <taxon>Ascomycota</taxon>
        <taxon>Pezizomycotina</taxon>
        <taxon>Eurotiomycetes</taxon>
        <taxon>Eurotiomycetidae</taxon>
        <taxon>Eurotiales</taxon>
        <taxon>Aspergillaceae</taxon>
        <taxon>Penicillium</taxon>
    </lineage>
</organism>
<accession>A0A140JWT9</accession>